<evidence type="ECO:0000255" key="1">
    <source>
        <dbReference type="HAMAP-Rule" id="MF_00045"/>
    </source>
</evidence>
<protein>
    <recommendedName>
        <fullName evidence="1">Oligoribonuclease</fullName>
        <ecNumber evidence="1">3.1.15.-</ecNumber>
    </recommendedName>
</protein>
<name>ORN_ACIAD</name>
<proteinExistence type="inferred from homology"/>
<gene>
    <name evidence="1" type="primary">orn</name>
    <name type="ordered locus">ACIAD3118</name>
</gene>
<keyword id="KW-0963">Cytoplasm</keyword>
<keyword id="KW-0269">Exonuclease</keyword>
<keyword id="KW-0378">Hydrolase</keyword>
<keyword id="KW-0540">Nuclease</keyword>
<accession>Q6F805</accession>
<sequence>MSSTQDTRLIWIDLEMTGLDTDNDQIIEIATIITDDHLNIVAEGPVLAVHQPDRILNAMDEWNTRQHGQSGLIERVRRSKLTARDVELQTLEFLKKWVNPKTSPMCGNSICQDRRFMHRLMPELEQYFHYRNLDVSSVKELAKRWRPEIMSGLKKNASHLAMDDIRDSISELKYYREYFFIKN</sequence>
<reference key="1">
    <citation type="journal article" date="2004" name="Nucleic Acids Res.">
        <title>Unique features revealed by the genome sequence of Acinetobacter sp. ADP1, a versatile and naturally transformation competent bacterium.</title>
        <authorList>
            <person name="Barbe V."/>
            <person name="Vallenet D."/>
            <person name="Fonknechten N."/>
            <person name="Kreimeyer A."/>
            <person name="Oztas S."/>
            <person name="Labarre L."/>
            <person name="Cruveiller S."/>
            <person name="Robert C."/>
            <person name="Duprat S."/>
            <person name="Wincker P."/>
            <person name="Ornston L.N."/>
            <person name="Weissenbach J."/>
            <person name="Marliere P."/>
            <person name="Cohen G.N."/>
            <person name="Medigue C."/>
        </authorList>
    </citation>
    <scope>NUCLEOTIDE SEQUENCE [LARGE SCALE GENOMIC DNA]</scope>
    <source>
        <strain>ATCC 33305 / BD413 / ADP1</strain>
    </source>
</reference>
<dbReference type="EC" id="3.1.15.-" evidence="1"/>
<dbReference type="EMBL" id="CR543861">
    <property type="protein sequence ID" value="CAG69810.1"/>
    <property type="molecule type" value="Genomic_DNA"/>
</dbReference>
<dbReference type="RefSeq" id="WP_004924364.1">
    <property type="nucleotide sequence ID" value="NC_005966.1"/>
</dbReference>
<dbReference type="SMR" id="Q6F805"/>
<dbReference type="STRING" id="202950.GCA_001485005_02770"/>
<dbReference type="GeneID" id="45235332"/>
<dbReference type="KEGG" id="aci:ACIAD3118"/>
<dbReference type="eggNOG" id="COG1949">
    <property type="taxonomic scope" value="Bacteria"/>
</dbReference>
<dbReference type="HOGENOM" id="CLU_064761_2_0_6"/>
<dbReference type="OrthoDB" id="9801329at2"/>
<dbReference type="BioCyc" id="ASP62977:ACIAD_RS14085-MONOMER"/>
<dbReference type="Proteomes" id="UP000000430">
    <property type="component" value="Chromosome"/>
</dbReference>
<dbReference type="GO" id="GO:0005737">
    <property type="term" value="C:cytoplasm"/>
    <property type="evidence" value="ECO:0007669"/>
    <property type="project" value="UniProtKB-SubCell"/>
</dbReference>
<dbReference type="GO" id="GO:0000175">
    <property type="term" value="F:3'-5'-RNA exonuclease activity"/>
    <property type="evidence" value="ECO:0007669"/>
    <property type="project" value="InterPro"/>
</dbReference>
<dbReference type="GO" id="GO:0003676">
    <property type="term" value="F:nucleic acid binding"/>
    <property type="evidence" value="ECO:0007669"/>
    <property type="project" value="InterPro"/>
</dbReference>
<dbReference type="GO" id="GO:0006259">
    <property type="term" value="P:DNA metabolic process"/>
    <property type="evidence" value="ECO:0007669"/>
    <property type="project" value="UniProtKB-ARBA"/>
</dbReference>
<dbReference type="CDD" id="cd06135">
    <property type="entry name" value="Orn"/>
    <property type="match status" value="1"/>
</dbReference>
<dbReference type="FunFam" id="3.30.420.10:FF:000003">
    <property type="entry name" value="Oligoribonuclease"/>
    <property type="match status" value="1"/>
</dbReference>
<dbReference type="Gene3D" id="3.30.420.10">
    <property type="entry name" value="Ribonuclease H-like superfamily/Ribonuclease H"/>
    <property type="match status" value="1"/>
</dbReference>
<dbReference type="HAMAP" id="MF_00045">
    <property type="entry name" value="Oligoribonuclease"/>
    <property type="match status" value="1"/>
</dbReference>
<dbReference type="InterPro" id="IPR013520">
    <property type="entry name" value="Exonuclease_RNaseT/DNA_pol3"/>
</dbReference>
<dbReference type="InterPro" id="IPR022894">
    <property type="entry name" value="Oligoribonuclease"/>
</dbReference>
<dbReference type="InterPro" id="IPR012337">
    <property type="entry name" value="RNaseH-like_sf"/>
</dbReference>
<dbReference type="InterPro" id="IPR036397">
    <property type="entry name" value="RNaseH_sf"/>
</dbReference>
<dbReference type="NCBIfam" id="NF003765">
    <property type="entry name" value="PRK05359.1"/>
    <property type="match status" value="1"/>
</dbReference>
<dbReference type="PANTHER" id="PTHR11046">
    <property type="entry name" value="OLIGORIBONUCLEASE, MITOCHONDRIAL"/>
    <property type="match status" value="1"/>
</dbReference>
<dbReference type="PANTHER" id="PTHR11046:SF0">
    <property type="entry name" value="OLIGORIBONUCLEASE, MITOCHONDRIAL"/>
    <property type="match status" value="1"/>
</dbReference>
<dbReference type="Pfam" id="PF00929">
    <property type="entry name" value="RNase_T"/>
    <property type="match status" value="1"/>
</dbReference>
<dbReference type="SMART" id="SM00479">
    <property type="entry name" value="EXOIII"/>
    <property type="match status" value="1"/>
</dbReference>
<dbReference type="SUPFAM" id="SSF53098">
    <property type="entry name" value="Ribonuclease H-like"/>
    <property type="match status" value="1"/>
</dbReference>
<organism>
    <name type="scientific">Acinetobacter baylyi (strain ATCC 33305 / BD413 / ADP1)</name>
    <dbReference type="NCBI Taxonomy" id="62977"/>
    <lineage>
        <taxon>Bacteria</taxon>
        <taxon>Pseudomonadati</taxon>
        <taxon>Pseudomonadota</taxon>
        <taxon>Gammaproteobacteria</taxon>
        <taxon>Moraxellales</taxon>
        <taxon>Moraxellaceae</taxon>
        <taxon>Acinetobacter</taxon>
    </lineage>
</organism>
<comment type="function">
    <text evidence="1">3'-to-5' exoribonuclease specific for small oligoribonucleotides.</text>
</comment>
<comment type="subcellular location">
    <subcellularLocation>
        <location evidence="1">Cytoplasm</location>
    </subcellularLocation>
</comment>
<comment type="similarity">
    <text evidence="1">Belongs to the oligoribonuclease family.</text>
</comment>
<feature type="chain" id="PRO_0000111016" description="Oligoribonuclease">
    <location>
        <begin position="1"/>
        <end position="183"/>
    </location>
</feature>
<feature type="domain" description="Exonuclease" evidence="1">
    <location>
        <begin position="9"/>
        <end position="172"/>
    </location>
</feature>
<feature type="active site" evidence="1">
    <location>
        <position position="130"/>
    </location>
</feature>